<organism>
    <name type="scientific">Human cytomegalovirus (strain AD169)</name>
    <name type="common">HHV-5</name>
    <name type="synonym">Human herpesvirus 5</name>
    <dbReference type="NCBI Taxonomy" id="10360"/>
    <lineage>
        <taxon>Viruses</taxon>
        <taxon>Duplodnaviria</taxon>
        <taxon>Heunggongvirae</taxon>
        <taxon>Peploviricota</taxon>
        <taxon>Herviviricetes</taxon>
        <taxon>Herpesvirales</taxon>
        <taxon>Orthoherpesviridae</taxon>
        <taxon>Betaherpesvirinae</taxon>
        <taxon>Cytomegalovirus</taxon>
        <taxon>Cytomegalovirus humanbeta5</taxon>
        <taxon>Human cytomegalovirus</taxon>
    </lineage>
</organism>
<gene>
    <name type="primary">UL28</name>
</gene>
<accession>P16847</accession>
<accession>Q7M6Q5</accession>
<keyword id="KW-1185">Reference proteome</keyword>
<protein>
    <recommendedName>
        <fullName>Uncharacterized protein UL28</fullName>
    </recommendedName>
</protein>
<feature type="chain" id="PRO_0000116314" description="Uncharacterized protein UL28">
    <location>
        <begin position="1"/>
        <end position="379"/>
    </location>
</feature>
<reference key="1">
    <citation type="journal article" date="1990" name="Curr. Top. Microbiol. Immunol.">
        <title>Analysis of the protein-coding content of the sequence of human cytomegalovirus strain AD169.</title>
        <authorList>
            <person name="Chee M.S."/>
            <person name="Bankier A.T."/>
            <person name="Beck S."/>
            <person name="Bohni R."/>
            <person name="Brown C.M."/>
            <person name="Cerny R."/>
            <person name="Horsnell T."/>
            <person name="Hutchison C.A. III"/>
            <person name="Kouzarides T."/>
            <person name="Martignetti J.A."/>
            <person name="Preddie E."/>
            <person name="Satchwell S.C."/>
            <person name="Tomlinson P."/>
            <person name="Weston K.M."/>
            <person name="Barrell B.G."/>
        </authorList>
    </citation>
    <scope>NUCLEOTIDE SEQUENCE [LARGE SCALE GENOMIC DNA]</scope>
</reference>
<reference key="2">
    <citation type="journal article" date="2003" name="J. Gen. Virol.">
        <title>The human cytomegalovirus genome revisited: comparison with the chimpanzee cytomegalovirus genome.</title>
        <authorList>
            <person name="Davison A.J."/>
            <person name="Dolan A."/>
            <person name="Akter P."/>
            <person name="Addison C."/>
            <person name="Dargan D.J."/>
            <person name="Alcendor D.J."/>
            <person name="McGeoch D.J."/>
            <person name="Hayward G.S."/>
        </authorList>
    </citation>
    <scope>NUCLEOTIDE SEQUENCE [GENOMIC DNA] OF 39-379</scope>
    <scope>GENOME REANNOTATION</scope>
</reference>
<reference key="3">
    <citation type="journal article" date="2003" name="J. Gen. Virol.">
        <authorList>
            <person name="Davison A.J."/>
            <person name="Dolan A."/>
            <person name="Akter P."/>
            <person name="Addison C."/>
            <person name="Dargan D.J."/>
            <person name="Alcendor D.J."/>
            <person name="McGeoch D.J."/>
            <person name="Hayward G.S."/>
        </authorList>
    </citation>
    <scope>ERRATUM OF PUBMED:12533697</scope>
</reference>
<dbReference type="EMBL" id="X17403">
    <property type="protein sequence ID" value="CAA35427.1"/>
    <property type="molecule type" value="Genomic_DNA"/>
</dbReference>
<dbReference type="EMBL" id="BK000394">
    <property type="status" value="NOT_ANNOTATED_CDS"/>
    <property type="molecule type" value="Genomic_DNA"/>
</dbReference>
<dbReference type="PIR" id="S09791">
    <property type="entry name" value="S09791"/>
</dbReference>
<dbReference type="Proteomes" id="UP000008991">
    <property type="component" value="Segment"/>
</dbReference>
<dbReference type="Proteomes" id="UP000008992">
    <property type="component" value="Segment"/>
</dbReference>
<dbReference type="InterPro" id="IPR003360">
    <property type="entry name" value="US22-like"/>
</dbReference>
<dbReference type="Pfam" id="PF02393">
    <property type="entry name" value="US22"/>
    <property type="match status" value="2"/>
</dbReference>
<name>UL28_HCMVA</name>
<evidence type="ECO:0000305" key="1"/>
<organismHost>
    <name type="scientific">Homo sapiens</name>
    <name type="common">Human</name>
    <dbReference type="NCBI Taxonomy" id="9606"/>
</organismHost>
<proteinExistence type="inferred from homology"/>
<comment type="similarity">
    <text evidence="1">Belongs to the herpesviridae US22 family.</text>
</comment>
<sequence length="379" mass="42738">GDGVFITESSVFETRASGRFFHRRRSRFDFRALVSPDRLVVGYFDSLSSLYLRGQPKFSSIWRGLRDAWTHKRPKPRERASGVHLQRYVRATAGRWLPLCWPPLHGIMLGDTQYFGVVRDHKTYRRFSCLRQAGRLYFIGLVSVYECVPDANTAPEIWVSGHGHAFAYLPGEDKVYVLGLSFGEFFENGLFAVYSFFERDYVDEIVEGAWFKHTFAGMYELSQILHDRANLLRVCQLHAGSKIRLGGSPACTFTFGSWNVAEADEANNFVIGVLEQAHFVVIGWMEPVNKAVFMDAHGGIHVLLYGTMLVKLAETLRGFIRQGSFWFRCPRRFCFSPLDSSATVAAKPVSSHTSPAYDVSEYVFSGRSVLDSVSGTGAS</sequence>